<proteinExistence type="inferred from homology"/>
<comment type="function">
    <text evidence="1">Catalyzes the synthesis of Und-PP-GlcNAc-ManNAcA-Fuc4NAc (Lipid III), the third lipid-linked intermediate involved in ECA synthesis.</text>
</comment>
<comment type="catalytic activity">
    <reaction evidence="1">
        <text>beta-D-ManNAcA-(1-&gt;4)-alpha-D-GlcNAc-di-trans,octa-cis-undecaprenyl diphosphate + dTDP-4-acetamido-4,6-dideoxy-alpha-D-galactose = alpha-D-FucNAc4-(1-&gt;4)-beta-D-ManNAcA-(1-&gt;4)-D-GlcNAc-undecaprenyl diphosphate + dTDP + H(+)</text>
        <dbReference type="Rhea" id="RHEA:28759"/>
        <dbReference type="ChEBI" id="CHEBI:15378"/>
        <dbReference type="ChEBI" id="CHEBI:58369"/>
        <dbReference type="ChEBI" id="CHEBI:61495"/>
        <dbReference type="ChEBI" id="CHEBI:61496"/>
        <dbReference type="ChEBI" id="CHEBI:68493"/>
        <dbReference type="EC" id="2.4.1.325"/>
    </reaction>
</comment>
<comment type="pathway">
    <text evidence="1">Bacterial outer membrane biogenesis; enterobacterial common antigen biosynthesis.</text>
</comment>
<comment type="subcellular location">
    <subcellularLocation>
        <location evidence="1">Cell inner membrane</location>
        <topology evidence="1">Peripheral membrane protein</topology>
    </subcellularLocation>
</comment>
<comment type="similarity">
    <text evidence="1">Belongs to the glycosyltransferase 56 family.</text>
</comment>
<accession>B7L8D5</accession>
<evidence type="ECO:0000255" key="1">
    <source>
        <dbReference type="HAMAP-Rule" id="MF_01002"/>
    </source>
</evidence>
<gene>
    <name evidence="1" type="primary">wecF</name>
    <name evidence="1" type="synonym">rffT</name>
    <name type="ordered locus">EC55989_4265</name>
</gene>
<reference key="1">
    <citation type="journal article" date="2009" name="PLoS Genet.">
        <title>Organised genome dynamics in the Escherichia coli species results in highly diverse adaptive paths.</title>
        <authorList>
            <person name="Touchon M."/>
            <person name="Hoede C."/>
            <person name="Tenaillon O."/>
            <person name="Barbe V."/>
            <person name="Baeriswyl S."/>
            <person name="Bidet P."/>
            <person name="Bingen E."/>
            <person name="Bonacorsi S."/>
            <person name="Bouchier C."/>
            <person name="Bouvet O."/>
            <person name="Calteau A."/>
            <person name="Chiapello H."/>
            <person name="Clermont O."/>
            <person name="Cruveiller S."/>
            <person name="Danchin A."/>
            <person name="Diard M."/>
            <person name="Dossat C."/>
            <person name="Karoui M.E."/>
            <person name="Frapy E."/>
            <person name="Garry L."/>
            <person name="Ghigo J.M."/>
            <person name="Gilles A.M."/>
            <person name="Johnson J."/>
            <person name="Le Bouguenec C."/>
            <person name="Lescat M."/>
            <person name="Mangenot S."/>
            <person name="Martinez-Jehanne V."/>
            <person name="Matic I."/>
            <person name="Nassif X."/>
            <person name="Oztas S."/>
            <person name="Petit M.A."/>
            <person name="Pichon C."/>
            <person name="Rouy Z."/>
            <person name="Ruf C.S."/>
            <person name="Schneider D."/>
            <person name="Tourret J."/>
            <person name="Vacherie B."/>
            <person name="Vallenet D."/>
            <person name="Medigue C."/>
            <person name="Rocha E.P.C."/>
            <person name="Denamur E."/>
        </authorList>
    </citation>
    <scope>NUCLEOTIDE SEQUENCE [LARGE SCALE GENOMIC DNA]</scope>
    <source>
        <strain>55989 / EAEC</strain>
    </source>
</reference>
<organism>
    <name type="scientific">Escherichia coli (strain 55989 / EAEC)</name>
    <dbReference type="NCBI Taxonomy" id="585055"/>
    <lineage>
        <taxon>Bacteria</taxon>
        <taxon>Pseudomonadati</taxon>
        <taxon>Pseudomonadota</taxon>
        <taxon>Gammaproteobacteria</taxon>
        <taxon>Enterobacterales</taxon>
        <taxon>Enterobacteriaceae</taxon>
        <taxon>Escherichia</taxon>
    </lineage>
</organism>
<feature type="chain" id="PRO_1000148784" description="TDP-N-acetylfucosamine:lipid II N-acetylfucosaminyltransferase">
    <location>
        <begin position="1"/>
        <end position="359"/>
    </location>
</feature>
<sequence>MTVLIHVLGSDIPHHNRTVLRFFNDALAATSEHAREFMVVGKDDGLSDSCPALSVQFFPGKKSLAEAVIAKAKANRQQRFFFHGQFNPTLWLALLSGGIKPSQFFWHIWGADLYELSSGLRYKLFYPLRRLAQKRVGCVFATRGDLSFFAKTHPKVRGELLYFPTRMDPSLNTMANDRQREGKMTILVGNSGDRSNDHIAALCAVHQQFGDTVKVVVPMGYPPNNEAYIEEVRQAGLELFSEENLQILSEKLEFDAYLALLRQCDLGYFIFARQQGIGTLCLLIQAGIPCVLNRENPFWQDMTEQHLPVLFTTDDLNEDIVREAQRQLASVDKNTIAFFSPNYLQGWQRALAIAAGEVA</sequence>
<dbReference type="EC" id="2.4.1.325" evidence="1"/>
<dbReference type="EMBL" id="CU928145">
    <property type="protein sequence ID" value="CAV00908.1"/>
    <property type="molecule type" value="Genomic_DNA"/>
</dbReference>
<dbReference type="RefSeq" id="WP_000217240.1">
    <property type="nucleotide sequence ID" value="NC_011748.1"/>
</dbReference>
<dbReference type="SMR" id="B7L8D5"/>
<dbReference type="CAZy" id="GT56">
    <property type="family name" value="Glycosyltransferase Family 56"/>
</dbReference>
<dbReference type="KEGG" id="eck:EC55989_4265"/>
<dbReference type="HOGENOM" id="CLU_066584_0_0_6"/>
<dbReference type="UniPathway" id="UPA00566"/>
<dbReference type="Proteomes" id="UP000000746">
    <property type="component" value="Chromosome"/>
</dbReference>
<dbReference type="GO" id="GO:0005886">
    <property type="term" value="C:plasma membrane"/>
    <property type="evidence" value="ECO:0007669"/>
    <property type="project" value="UniProtKB-SubCell"/>
</dbReference>
<dbReference type="GO" id="GO:0102031">
    <property type="term" value="F:4-acetamido-4,6-dideoxy-D-galactose transferase activity"/>
    <property type="evidence" value="ECO:0007669"/>
    <property type="project" value="UniProtKB-EC"/>
</dbReference>
<dbReference type="GO" id="GO:0008417">
    <property type="term" value="F:fucosyltransferase activity"/>
    <property type="evidence" value="ECO:0007669"/>
    <property type="project" value="InterPro"/>
</dbReference>
<dbReference type="GO" id="GO:0009246">
    <property type="term" value="P:enterobacterial common antigen biosynthetic process"/>
    <property type="evidence" value="ECO:0007669"/>
    <property type="project" value="UniProtKB-UniRule"/>
</dbReference>
<dbReference type="GO" id="GO:0036065">
    <property type="term" value="P:fucosylation"/>
    <property type="evidence" value="ECO:0007669"/>
    <property type="project" value="InterPro"/>
</dbReference>
<dbReference type="HAMAP" id="MF_01002">
    <property type="entry name" value="WecF_RffT"/>
    <property type="match status" value="1"/>
</dbReference>
<dbReference type="InterPro" id="IPR009993">
    <property type="entry name" value="WecF"/>
</dbReference>
<dbReference type="NCBIfam" id="NF002752">
    <property type="entry name" value="PRK02797.1-1"/>
    <property type="match status" value="1"/>
</dbReference>
<dbReference type="NCBIfam" id="NF002753">
    <property type="entry name" value="PRK02797.1-2"/>
    <property type="match status" value="1"/>
</dbReference>
<dbReference type="NCBIfam" id="NF002754">
    <property type="entry name" value="PRK02797.1-3"/>
    <property type="match status" value="1"/>
</dbReference>
<dbReference type="Pfam" id="PF07429">
    <property type="entry name" value="Glyco_transf_56"/>
    <property type="match status" value="1"/>
</dbReference>
<name>WECF_ECO55</name>
<protein>
    <recommendedName>
        <fullName evidence="1">TDP-N-acetylfucosamine:lipid II N-acetylfucosaminyltransferase</fullName>
        <ecNumber evidence="1">2.4.1.325</ecNumber>
    </recommendedName>
    <alternativeName>
        <fullName evidence="1">4-alpha-L-fucosyltransferase</fullName>
    </alternativeName>
    <alternativeName>
        <fullName evidence="1">TDP-Fuc4NAc:lipid II Fuc4NAc transferase</fullName>
        <shortName evidence="1">Fuc4NAc transferase</shortName>
    </alternativeName>
</protein>
<keyword id="KW-0997">Cell inner membrane</keyword>
<keyword id="KW-1003">Cell membrane</keyword>
<keyword id="KW-0328">Glycosyltransferase</keyword>
<keyword id="KW-0472">Membrane</keyword>
<keyword id="KW-1185">Reference proteome</keyword>
<keyword id="KW-0808">Transferase</keyword>